<evidence type="ECO:0000255" key="1">
    <source>
        <dbReference type="HAMAP-Rule" id="MF_00144"/>
    </source>
</evidence>
<comment type="function">
    <text evidence="1">Catalyzes the 2-thiolation of uridine at the wobble position (U34) of tRNA, leading to the formation of s(2)U34.</text>
</comment>
<comment type="catalytic activity">
    <reaction evidence="1">
        <text>S-sulfanyl-L-cysteinyl-[protein] + uridine(34) in tRNA + AH2 + ATP = 2-thiouridine(34) in tRNA + L-cysteinyl-[protein] + A + AMP + diphosphate + H(+)</text>
        <dbReference type="Rhea" id="RHEA:47032"/>
        <dbReference type="Rhea" id="RHEA-COMP:10131"/>
        <dbReference type="Rhea" id="RHEA-COMP:11726"/>
        <dbReference type="Rhea" id="RHEA-COMP:11727"/>
        <dbReference type="Rhea" id="RHEA-COMP:11728"/>
        <dbReference type="ChEBI" id="CHEBI:13193"/>
        <dbReference type="ChEBI" id="CHEBI:15378"/>
        <dbReference type="ChEBI" id="CHEBI:17499"/>
        <dbReference type="ChEBI" id="CHEBI:29950"/>
        <dbReference type="ChEBI" id="CHEBI:30616"/>
        <dbReference type="ChEBI" id="CHEBI:33019"/>
        <dbReference type="ChEBI" id="CHEBI:61963"/>
        <dbReference type="ChEBI" id="CHEBI:65315"/>
        <dbReference type="ChEBI" id="CHEBI:87170"/>
        <dbReference type="ChEBI" id="CHEBI:456215"/>
        <dbReference type="EC" id="2.8.1.13"/>
    </reaction>
</comment>
<comment type="subcellular location">
    <subcellularLocation>
        <location evidence="1">Cytoplasm</location>
    </subcellularLocation>
</comment>
<comment type="similarity">
    <text evidence="1">Belongs to the MnmA/TRMU family.</text>
</comment>
<sequence>MAKIMVAMSGGVDSSLAAALLHEAGHDVTGVTLHLWEGDDDRLAESLCCSQEMTESARRVCAQLGIPYYVFNYQREFRRYVIEYFLREYASGFTPNPCLECNREIKFRALLARARTLGFDYVATGHYARIRADETRHNGEDAGLPPAERAQRTTYRLLRAVDREKDQSYMLYMLGQDDLARLIFPIGEYTKAEVRAMAAARGLASANRPESQDICFVPGGDYRNLLREERPDALRPGPILDLEGREVGRHQGLPLYTIGQRRGLGIATGQPMYVTALDVARNAVIVGPESALRRESLRAEWVTFVSGMWPEAPFDCLAQIRAHADAVPARVIPGEAGTVDVHFSRPQRAVTPGQAIVFYDGDVVLGGGRIARD</sequence>
<accession>A5UV64</accession>
<gene>
    <name evidence="1" type="primary">mnmA</name>
    <name type="ordered locus">RoseRS_2136</name>
</gene>
<dbReference type="EC" id="2.8.1.13" evidence="1"/>
<dbReference type="EMBL" id="CP000686">
    <property type="protein sequence ID" value="ABQ90517.1"/>
    <property type="molecule type" value="Genomic_DNA"/>
</dbReference>
<dbReference type="RefSeq" id="WP_011956863.1">
    <property type="nucleotide sequence ID" value="NC_009523.1"/>
</dbReference>
<dbReference type="SMR" id="A5UV64"/>
<dbReference type="STRING" id="357808.RoseRS_2136"/>
<dbReference type="KEGG" id="rrs:RoseRS_2136"/>
<dbReference type="eggNOG" id="COG0482">
    <property type="taxonomic scope" value="Bacteria"/>
</dbReference>
<dbReference type="HOGENOM" id="CLU_035188_0_0_0"/>
<dbReference type="OrthoDB" id="9800696at2"/>
<dbReference type="Proteomes" id="UP000006554">
    <property type="component" value="Chromosome"/>
</dbReference>
<dbReference type="GO" id="GO:0005737">
    <property type="term" value="C:cytoplasm"/>
    <property type="evidence" value="ECO:0007669"/>
    <property type="project" value="UniProtKB-SubCell"/>
</dbReference>
<dbReference type="GO" id="GO:0005524">
    <property type="term" value="F:ATP binding"/>
    <property type="evidence" value="ECO:0007669"/>
    <property type="project" value="UniProtKB-KW"/>
</dbReference>
<dbReference type="GO" id="GO:0000049">
    <property type="term" value="F:tRNA binding"/>
    <property type="evidence" value="ECO:0007669"/>
    <property type="project" value="UniProtKB-KW"/>
</dbReference>
<dbReference type="GO" id="GO:0103016">
    <property type="term" value="F:tRNA-uridine 2-sulfurtransferase activity"/>
    <property type="evidence" value="ECO:0007669"/>
    <property type="project" value="UniProtKB-EC"/>
</dbReference>
<dbReference type="GO" id="GO:0002143">
    <property type="term" value="P:tRNA wobble position uridine thiolation"/>
    <property type="evidence" value="ECO:0007669"/>
    <property type="project" value="TreeGrafter"/>
</dbReference>
<dbReference type="CDD" id="cd01998">
    <property type="entry name" value="MnmA_TRMU-like"/>
    <property type="match status" value="1"/>
</dbReference>
<dbReference type="FunFam" id="2.30.30.280:FF:000001">
    <property type="entry name" value="tRNA-specific 2-thiouridylase MnmA"/>
    <property type="match status" value="1"/>
</dbReference>
<dbReference type="FunFam" id="3.40.50.620:FF:000115">
    <property type="entry name" value="tRNA-specific 2-thiouridylase MnmA"/>
    <property type="match status" value="1"/>
</dbReference>
<dbReference type="Gene3D" id="2.30.30.280">
    <property type="entry name" value="Adenine nucleotide alpha hydrolases-like domains"/>
    <property type="match status" value="1"/>
</dbReference>
<dbReference type="Gene3D" id="3.40.50.620">
    <property type="entry name" value="HUPs"/>
    <property type="match status" value="1"/>
</dbReference>
<dbReference type="Gene3D" id="2.40.30.10">
    <property type="entry name" value="Translation factors"/>
    <property type="match status" value="1"/>
</dbReference>
<dbReference type="HAMAP" id="MF_00144">
    <property type="entry name" value="tRNA_thiouridyl_MnmA"/>
    <property type="match status" value="1"/>
</dbReference>
<dbReference type="InterPro" id="IPR004506">
    <property type="entry name" value="MnmA-like"/>
</dbReference>
<dbReference type="InterPro" id="IPR046885">
    <property type="entry name" value="MnmA-like_C"/>
</dbReference>
<dbReference type="InterPro" id="IPR046884">
    <property type="entry name" value="MnmA-like_central"/>
</dbReference>
<dbReference type="InterPro" id="IPR023382">
    <property type="entry name" value="MnmA-like_central_sf"/>
</dbReference>
<dbReference type="InterPro" id="IPR014729">
    <property type="entry name" value="Rossmann-like_a/b/a_fold"/>
</dbReference>
<dbReference type="NCBIfam" id="NF001138">
    <property type="entry name" value="PRK00143.1"/>
    <property type="match status" value="1"/>
</dbReference>
<dbReference type="NCBIfam" id="TIGR00420">
    <property type="entry name" value="trmU"/>
    <property type="match status" value="1"/>
</dbReference>
<dbReference type="PANTHER" id="PTHR11933:SF5">
    <property type="entry name" value="MITOCHONDRIAL TRNA-SPECIFIC 2-THIOURIDYLASE 1"/>
    <property type="match status" value="1"/>
</dbReference>
<dbReference type="PANTHER" id="PTHR11933">
    <property type="entry name" value="TRNA 5-METHYLAMINOMETHYL-2-THIOURIDYLATE -METHYLTRANSFERASE"/>
    <property type="match status" value="1"/>
</dbReference>
<dbReference type="Pfam" id="PF03054">
    <property type="entry name" value="tRNA_Me_trans"/>
    <property type="match status" value="1"/>
</dbReference>
<dbReference type="Pfam" id="PF20258">
    <property type="entry name" value="tRNA_Me_trans_C"/>
    <property type="match status" value="1"/>
</dbReference>
<dbReference type="Pfam" id="PF20259">
    <property type="entry name" value="tRNA_Me_trans_M"/>
    <property type="match status" value="1"/>
</dbReference>
<dbReference type="SUPFAM" id="SSF52402">
    <property type="entry name" value="Adenine nucleotide alpha hydrolases-like"/>
    <property type="match status" value="1"/>
</dbReference>
<proteinExistence type="inferred from homology"/>
<protein>
    <recommendedName>
        <fullName evidence="1">tRNA-specific 2-thiouridylase MnmA</fullName>
        <ecNumber evidence="1">2.8.1.13</ecNumber>
    </recommendedName>
</protein>
<feature type="chain" id="PRO_0000349780" description="tRNA-specific 2-thiouridylase MnmA">
    <location>
        <begin position="1"/>
        <end position="373"/>
    </location>
</feature>
<feature type="region of interest" description="Interaction with tRNA" evidence="1">
    <location>
        <begin position="165"/>
        <end position="167"/>
    </location>
</feature>
<feature type="active site" description="Nucleophile" evidence="1">
    <location>
        <position position="101"/>
    </location>
</feature>
<feature type="active site" description="Cysteine persulfide intermediate" evidence="1">
    <location>
        <position position="215"/>
    </location>
</feature>
<feature type="binding site" evidence="1">
    <location>
        <begin position="7"/>
        <end position="14"/>
    </location>
    <ligand>
        <name>ATP</name>
        <dbReference type="ChEBI" id="CHEBI:30616"/>
    </ligand>
</feature>
<feature type="binding site" evidence="1">
    <location>
        <position position="33"/>
    </location>
    <ligand>
        <name>ATP</name>
        <dbReference type="ChEBI" id="CHEBI:30616"/>
    </ligand>
</feature>
<feature type="binding site" evidence="1">
    <location>
        <position position="125"/>
    </location>
    <ligand>
        <name>ATP</name>
        <dbReference type="ChEBI" id="CHEBI:30616"/>
    </ligand>
</feature>
<feature type="site" description="Interaction with tRNA" evidence="1">
    <location>
        <position position="126"/>
    </location>
</feature>
<feature type="site" description="Interaction with tRNA" evidence="1">
    <location>
        <position position="354"/>
    </location>
</feature>
<feature type="disulfide bond" description="Alternate" evidence="1">
    <location>
        <begin position="101"/>
        <end position="215"/>
    </location>
</feature>
<name>MNMA_ROSS1</name>
<organism>
    <name type="scientific">Roseiflexus sp. (strain RS-1)</name>
    <dbReference type="NCBI Taxonomy" id="357808"/>
    <lineage>
        <taxon>Bacteria</taxon>
        <taxon>Bacillati</taxon>
        <taxon>Chloroflexota</taxon>
        <taxon>Chloroflexia</taxon>
        <taxon>Chloroflexales</taxon>
        <taxon>Roseiflexineae</taxon>
        <taxon>Roseiflexaceae</taxon>
        <taxon>Roseiflexus</taxon>
    </lineage>
</organism>
<keyword id="KW-0067">ATP-binding</keyword>
<keyword id="KW-0963">Cytoplasm</keyword>
<keyword id="KW-1015">Disulfide bond</keyword>
<keyword id="KW-0547">Nucleotide-binding</keyword>
<keyword id="KW-0694">RNA-binding</keyword>
<keyword id="KW-0808">Transferase</keyword>
<keyword id="KW-0819">tRNA processing</keyword>
<keyword id="KW-0820">tRNA-binding</keyword>
<reference key="1">
    <citation type="submission" date="2007-04" db="EMBL/GenBank/DDBJ databases">
        <title>Complete sequence of Roseiflexus sp. RS-1.</title>
        <authorList>
            <consortium name="US DOE Joint Genome Institute"/>
            <person name="Copeland A."/>
            <person name="Lucas S."/>
            <person name="Lapidus A."/>
            <person name="Barry K."/>
            <person name="Detter J.C."/>
            <person name="Glavina del Rio T."/>
            <person name="Hammon N."/>
            <person name="Israni S."/>
            <person name="Dalin E."/>
            <person name="Tice H."/>
            <person name="Pitluck S."/>
            <person name="Chertkov O."/>
            <person name="Brettin T."/>
            <person name="Bruce D."/>
            <person name="Han C."/>
            <person name="Schmutz J."/>
            <person name="Larimer F."/>
            <person name="Land M."/>
            <person name="Hauser L."/>
            <person name="Kyrpides N."/>
            <person name="Mikhailova N."/>
            <person name="Bryant D.A."/>
            <person name="Richardson P."/>
        </authorList>
    </citation>
    <scope>NUCLEOTIDE SEQUENCE [LARGE SCALE GENOMIC DNA]</scope>
    <source>
        <strain>RS-1</strain>
    </source>
</reference>